<protein>
    <recommendedName>
        <fullName evidence="1">Ribonuclease P protein component</fullName>
        <shortName evidence="1">RNase P protein</shortName>
        <shortName evidence="1">RNaseP protein</shortName>
        <ecNumber evidence="1">3.1.26.5</ecNumber>
    </recommendedName>
    <alternativeName>
        <fullName evidence="1">Protein C5</fullName>
    </alternativeName>
</protein>
<evidence type="ECO:0000255" key="1">
    <source>
        <dbReference type="HAMAP-Rule" id="MF_00227"/>
    </source>
</evidence>
<feature type="chain" id="PRO_1000194669" description="Ribonuclease P protein component">
    <location>
        <begin position="1"/>
        <end position="125"/>
    </location>
</feature>
<reference key="1">
    <citation type="submission" date="2009-03" db="EMBL/GenBank/DDBJ databases">
        <title>Comparison of the complete genome sequences of Rhodococcus erythropolis PR4 and Rhodococcus opacus B4.</title>
        <authorList>
            <person name="Takarada H."/>
            <person name="Sekine M."/>
            <person name="Hosoyama A."/>
            <person name="Yamada R."/>
            <person name="Fujisawa T."/>
            <person name="Omata S."/>
            <person name="Shimizu A."/>
            <person name="Tsukatani N."/>
            <person name="Tanikawa S."/>
            <person name="Fujita N."/>
            <person name="Harayama S."/>
        </authorList>
    </citation>
    <scope>NUCLEOTIDE SEQUENCE [LARGE SCALE GENOMIC DNA]</scope>
    <source>
        <strain>B4</strain>
    </source>
</reference>
<comment type="function">
    <text evidence="1">RNaseP catalyzes the removal of the 5'-leader sequence from pre-tRNA to produce the mature 5'-terminus. It can also cleave other RNA substrates such as 4.5S RNA. The protein component plays an auxiliary but essential role in vivo by binding to the 5'-leader sequence and broadening the substrate specificity of the ribozyme.</text>
</comment>
<comment type="catalytic activity">
    <reaction evidence="1">
        <text>Endonucleolytic cleavage of RNA, removing 5'-extranucleotides from tRNA precursor.</text>
        <dbReference type="EC" id="3.1.26.5"/>
    </reaction>
</comment>
<comment type="subunit">
    <text evidence="1">Consists of a catalytic RNA component (M1 or rnpB) and a protein subunit.</text>
</comment>
<comment type="similarity">
    <text evidence="1">Belongs to the RnpA family.</text>
</comment>
<proteinExistence type="inferred from homology"/>
<name>RNPA_RHOOB</name>
<keyword id="KW-0255">Endonuclease</keyword>
<keyword id="KW-0378">Hydrolase</keyword>
<keyword id="KW-0540">Nuclease</keyword>
<keyword id="KW-0694">RNA-binding</keyword>
<keyword id="KW-0819">tRNA processing</keyword>
<organism>
    <name type="scientific">Rhodococcus opacus (strain B4)</name>
    <dbReference type="NCBI Taxonomy" id="632772"/>
    <lineage>
        <taxon>Bacteria</taxon>
        <taxon>Bacillati</taxon>
        <taxon>Actinomycetota</taxon>
        <taxon>Actinomycetes</taxon>
        <taxon>Mycobacteriales</taxon>
        <taxon>Nocardiaceae</taxon>
        <taxon>Rhodococcus</taxon>
    </lineage>
</organism>
<accession>C1B7S5</accession>
<gene>
    <name evidence="1" type="primary">rnpA</name>
    <name type="ordered locus">ROP_34810</name>
</gene>
<sequence>MLPEPHRLRRHSDFSLTVRRGRRMGRRDLVVHAFDRAQADELVSSGGPRFGLVVSKAVGPAVIRHRVARRLRHICIDLVDSVPRGTDVVIRALPGAATASSRDLEKQLRAGLLRLDLLAPVSNST</sequence>
<dbReference type="EC" id="3.1.26.5" evidence="1"/>
<dbReference type="EMBL" id="AP011115">
    <property type="protein sequence ID" value="BAH51728.1"/>
    <property type="molecule type" value="Genomic_DNA"/>
</dbReference>
<dbReference type="RefSeq" id="WP_012690675.1">
    <property type="nucleotide sequence ID" value="NC_012522.1"/>
</dbReference>
<dbReference type="SMR" id="C1B7S5"/>
<dbReference type="STRING" id="632772.ROP_34810"/>
<dbReference type="KEGG" id="rop:ROP_34810"/>
<dbReference type="PATRIC" id="fig|632772.20.peg.3646"/>
<dbReference type="HOGENOM" id="CLU_117179_4_1_11"/>
<dbReference type="OrthoDB" id="196964at2"/>
<dbReference type="Proteomes" id="UP000002212">
    <property type="component" value="Chromosome"/>
</dbReference>
<dbReference type="GO" id="GO:0030677">
    <property type="term" value="C:ribonuclease P complex"/>
    <property type="evidence" value="ECO:0007669"/>
    <property type="project" value="TreeGrafter"/>
</dbReference>
<dbReference type="GO" id="GO:0042781">
    <property type="term" value="F:3'-tRNA processing endoribonuclease activity"/>
    <property type="evidence" value="ECO:0007669"/>
    <property type="project" value="TreeGrafter"/>
</dbReference>
<dbReference type="GO" id="GO:0004526">
    <property type="term" value="F:ribonuclease P activity"/>
    <property type="evidence" value="ECO:0007669"/>
    <property type="project" value="UniProtKB-UniRule"/>
</dbReference>
<dbReference type="GO" id="GO:0000049">
    <property type="term" value="F:tRNA binding"/>
    <property type="evidence" value="ECO:0007669"/>
    <property type="project" value="UniProtKB-UniRule"/>
</dbReference>
<dbReference type="GO" id="GO:0001682">
    <property type="term" value="P:tRNA 5'-leader removal"/>
    <property type="evidence" value="ECO:0007669"/>
    <property type="project" value="UniProtKB-UniRule"/>
</dbReference>
<dbReference type="Gene3D" id="3.30.230.10">
    <property type="match status" value="1"/>
</dbReference>
<dbReference type="HAMAP" id="MF_00227">
    <property type="entry name" value="RNase_P"/>
    <property type="match status" value="1"/>
</dbReference>
<dbReference type="InterPro" id="IPR020568">
    <property type="entry name" value="Ribosomal_Su5_D2-typ_SF"/>
</dbReference>
<dbReference type="InterPro" id="IPR014721">
    <property type="entry name" value="Ribsml_uS5_D2-typ_fold_subgr"/>
</dbReference>
<dbReference type="InterPro" id="IPR000100">
    <property type="entry name" value="RNase_P"/>
</dbReference>
<dbReference type="InterPro" id="IPR020539">
    <property type="entry name" value="RNase_P_CS"/>
</dbReference>
<dbReference type="NCBIfam" id="TIGR00188">
    <property type="entry name" value="rnpA"/>
    <property type="match status" value="1"/>
</dbReference>
<dbReference type="PANTHER" id="PTHR33992">
    <property type="entry name" value="RIBONUCLEASE P PROTEIN COMPONENT"/>
    <property type="match status" value="1"/>
</dbReference>
<dbReference type="PANTHER" id="PTHR33992:SF1">
    <property type="entry name" value="RIBONUCLEASE P PROTEIN COMPONENT"/>
    <property type="match status" value="1"/>
</dbReference>
<dbReference type="Pfam" id="PF00825">
    <property type="entry name" value="Ribonuclease_P"/>
    <property type="match status" value="1"/>
</dbReference>
<dbReference type="SUPFAM" id="SSF54211">
    <property type="entry name" value="Ribosomal protein S5 domain 2-like"/>
    <property type="match status" value="1"/>
</dbReference>
<dbReference type="PROSITE" id="PS00648">
    <property type="entry name" value="RIBONUCLEASE_P"/>
    <property type="match status" value="1"/>
</dbReference>